<dbReference type="EC" id="1.5.1.5" evidence="1"/>
<dbReference type="EC" id="3.5.4.9" evidence="1"/>
<dbReference type="EMBL" id="BX571856">
    <property type="protein sequence ID" value="CAG40040.1"/>
    <property type="molecule type" value="Genomic_DNA"/>
</dbReference>
<dbReference type="RefSeq" id="WP_000225845.1">
    <property type="nucleotide sequence ID" value="NC_002952.2"/>
</dbReference>
<dbReference type="SMR" id="Q6GI21"/>
<dbReference type="KEGG" id="sar:SAR1037"/>
<dbReference type="HOGENOM" id="CLU_034045_2_1_9"/>
<dbReference type="UniPathway" id="UPA00193"/>
<dbReference type="Proteomes" id="UP000000596">
    <property type="component" value="Chromosome"/>
</dbReference>
<dbReference type="GO" id="GO:0005829">
    <property type="term" value="C:cytosol"/>
    <property type="evidence" value="ECO:0007669"/>
    <property type="project" value="TreeGrafter"/>
</dbReference>
<dbReference type="GO" id="GO:0004477">
    <property type="term" value="F:methenyltetrahydrofolate cyclohydrolase activity"/>
    <property type="evidence" value="ECO:0007669"/>
    <property type="project" value="UniProtKB-UniRule"/>
</dbReference>
<dbReference type="GO" id="GO:0004488">
    <property type="term" value="F:methylenetetrahydrofolate dehydrogenase (NADP+) activity"/>
    <property type="evidence" value="ECO:0007669"/>
    <property type="project" value="UniProtKB-UniRule"/>
</dbReference>
<dbReference type="GO" id="GO:0000105">
    <property type="term" value="P:L-histidine biosynthetic process"/>
    <property type="evidence" value="ECO:0007669"/>
    <property type="project" value="UniProtKB-KW"/>
</dbReference>
<dbReference type="GO" id="GO:0009086">
    <property type="term" value="P:methionine biosynthetic process"/>
    <property type="evidence" value="ECO:0007669"/>
    <property type="project" value="UniProtKB-KW"/>
</dbReference>
<dbReference type="GO" id="GO:0006164">
    <property type="term" value="P:purine nucleotide biosynthetic process"/>
    <property type="evidence" value="ECO:0007669"/>
    <property type="project" value="UniProtKB-KW"/>
</dbReference>
<dbReference type="GO" id="GO:0035999">
    <property type="term" value="P:tetrahydrofolate interconversion"/>
    <property type="evidence" value="ECO:0007669"/>
    <property type="project" value="UniProtKB-UniRule"/>
</dbReference>
<dbReference type="CDD" id="cd01080">
    <property type="entry name" value="NAD_bind_m-THF_DH_Cyclohyd"/>
    <property type="match status" value="1"/>
</dbReference>
<dbReference type="FunFam" id="3.40.50.10860:FF:000001">
    <property type="entry name" value="Bifunctional protein FolD"/>
    <property type="match status" value="1"/>
</dbReference>
<dbReference type="FunFam" id="3.40.50.720:FF:000094">
    <property type="entry name" value="Bifunctional protein FolD"/>
    <property type="match status" value="1"/>
</dbReference>
<dbReference type="Gene3D" id="3.40.50.10860">
    <property type="entry name" value="Leucine Dehydrogenase, chain A, domain 1"/>
    <property type="match status" value="1"/>
</dbReference>
<dbReference type="Gene3D" id="3.40.50.720">
    <property type="entry name" value="NAD(P)-binding Rossmann-like Domain"/>
    <property type="match status" value="1"/>
</dbReference>
<dbReference type="HAMAP" id="MF_01576">
    <property type="entry name" value="THF_DHG_CYH"/>
    <property type="match status" value="1"/>
</dbReference>
<dbReference type="InterPro" id="IPR046346">
    <property type="entry name" value="Aminoacid_DH-like_N_sf"/>
</dbReference>
<dbReference type="InterPro" id="IPR036291">
    <property type="entry name" value="NAD(P)-bd_dom_sf"/>
</dbReference>
<dbReference type="InterPro" id="IPR000672">
    <property type="entry name" value="THF_DH/CycHdrlase"/>
</dbReference>
<dbReference type="InterPro" id="IPR020630">
    <property type="entry name" value="THF_DH/CycHdrlase_cat_dom"/>
</dbReference>
<dbReference type="InterPro" id="IPR020631">
    <property type="entry name" value="THF_DH/CycHdrlase_NAD-bd_dom"/>
</dbReference>
<dbReference type="NCBIfam" id="NF010772">
    <property type="entry name" value="PRK14175.1"/>
    <property type="match status" value="1"/>
</dbReference>
<dbReference type="PANTHER" id="PTHR48099:SF5">
    <property type="entry name" value="C-1-TETRAHYDROFOLATE SYNTHASE, CYTOPLASMIC"/>
    <property type="match status" value="1"/>
</dbReference>
<dbReference type="PANTHER" id="PTHR48099">
    <property type="entry name" value="C-1-TETRAHYDROFOLATE SYNTHASE, CYTOPLASMIC-RELATED"/>
    <property type="match status" value="1"/>
</dbReference>
<dbReference type="Pfam" id="PF00763">
    <property type="entry name" value="THF_DHG_CYH"/>
    <property type="match status" value="1"/>
</dbReference>
<dbReference type="Pfam" id="PF02882">
    <property type="entry name" value="THF_DHG_CYH_C"/>
    <property type="match status" value="1"/>
</dbReference>
<dbReference type="PRINTS" id="PR00085">
    <property type="entry name" value="THFDHDRGNASE"/>
</dbReference>
<dbReference type="SUPFAM" id="SSF53223">
    <property type="entry name" value="Aminoacid dehydrogenase-like, N-terminal domain"/>
    <property type="match status" value="1"/>
</dbReference>
<dbReference type="SUPFAM" id="SSF51735">
    <property type="entry name" value="NAD(P)-binding Rossmann-fold domains"/>
    <property type="match status" value="1"/>
</dbReference>
<feature type="chain" id="PRO_0000265948" description="Bifunctional protein FolD">
    <location>
        <begin position="1"/>
        <end position="286"/>
    </location>
</feature>
<feature type="binding site" evidence="1">
    <location>
        <begin position="165"/>
        <end position="167"/>
    </location>
    <ligand>
        <name>NADP(+)</name>
        <dbReference type="ChEBI" id="CHEBI:58349"/>
    </ligand>
</feature>
<feature type="binding site" evidence="1">
    <location>
        <position position="190"/>
    </location>
    <ligand>
        <name>NADP(+)</name>
        <dbReference type="ChEBI" id="CHEBI:58349"/>
    </ligand>
</feature>
<proteinExistence type="inferred from homology"/>
<name>FOLD_STAAR</name>
<evidence type="ECO:0000255" key="1">
    <source>
        <dbReference type="HAMAP-Rule" id="MF_01576"/>
    </source>
</evidence>
<gene>
    <name evidence="1" type="primary">folD</name>
    <name type="ordered locus">SAR1037</name>
</gene>
<organism>
    <name type="scientific">Staphylococcus aureus (strain MRSA252)</name>
    <dbReference type="NCBI Taxonomy" id="282458"/>
    <lineage>
        <taxon>Bacteria</taxon>
        <taxon>Bacillati</taxon>
        <taxon>Bacillota</taxon>
        <taxon>Bacilli</taxon>
        <taxon>Bacillales</taxon>
        <taxon>Staphylococcaceae</taxon>
        <taxon>Staphylococcus</taxon>
    </lineage>
</organism>
<reference key="1">
    <citation type="journal article" date="2004" name="Proc. Natl. Acad. Sci. U.S.A.">
        <title>Complete genomes of two clinical Staphylococcus aureus strains: evidence for the rapid evolution of virulence and drug resistance.</title>
        <authorList>
            <person name="Holden M.T.G."/>
            <person name="Feil E.J."/>
            <person name="Lindsay J.A."/>
            <person name="Peacock S.J."/>
            <person name="Day N.P.J."/>
            <person name="Enright M.C."/>
            <person name="Foster T.J."/>
            <person name="Moore C.E."/>
            <person name="Hurst L."/>
            <person name="Atkin R."/>
            <person name="Barron A."/>
            <person name="Bason N."/>
            <person name="Bentley S.D."/>
            <person name="Chillingworth C."/>
            <person name="Chillingworth T."/>
            <person name="Churcher C."/>
            <person name="Clark L."/>
            <person name="Corton C."/>
            <person name="Cronin A."/>
            <person name="Doggett J."/>
            <person name="Dowd L."/>
            <person name="Feltwell T."/>
            <person name="Hance Z."/>
            <person name="Harris B."/>
            <person name="Hauser H."/>
            <person name="Holroyd S."/>
            <person name="Jagels K."/>
            <person name="James K.D."/>
            <person name="Lennard N."/>
            <person name="Line A."/>
            <person name="Mayes R."/>
            <person name="Moule S."/>
            <person name="Mungall K."/>
            <person name="Ormond D."/>
            <person name="Quail M.A."/>
            <person name="Rabbinowitsch E."/>
            <person name="Rutherford K.M."/>
            <person name="Sanders M."/>
            <person name="Sharp S."/>
            <person name="Simmonds M."/>
            <person name="Stevens K."/>
            <person name="Whitehead S."/>
            <person name="Barrell B.G."/>
            <person name="Spratt B.G."/>
            <person name="Parkhill J."/>
        </authorList>
    </citation>
    <scope>NUCLEOTIDE SEQUENCE [LARGE SCALE GENOMIC DNA]</scope>
    <source>
        <strain>MRSA252</strain>
    </source>
</reference>
<keyword id="KW-0028">Amino-acid biosynthesis</keyword>
<keyword id="KW-0368">Histidine biosynthesis</keyword>
<keyword id="KW-0378">Hydrolase</keyword>
<keyword id="KW-0486">Methionine biosynthesis</keyword>
<keyword id="KW-0511">Multifunctional enzyme</keyword>
<keyword id="KW-0521">NADP</keyword>
<keyword id="KW-0554">One-carbon metabolism</keyword>
<keyword id="KW-0560">Oxidoreductase</keyword>
<keyword id="KW-0658">Purine biosynthesis</keyword>
<protein>
    <recommendedName>
        <fullName evidence="1">Bifunctional protein FolD</fullName>
    </recommendedName>
    <domain>
        <recommendedName>
            <fullName evidence="1">Methylenetetrahydrofolate dehydrogenase</fullName>
            <ecNumber evidence="1">1.5.1.5</ecNumber>
        </recommendedName>
    </domain>
    <domain>
        <recommendedName>
            <fullName evidence="1">Methenyltetrahydrofolate cyclohydrolase</fullName>
            <ecNumber evidence="1">3.5.4.9</ecNumber>
        </recommendedName>
    </domain>
</protein>
<accession>Q6GI21</accession>
<comment type="function">
    <text evidence="1">Catalyzes the oxidation of 5,10-methylenetetrahydrofolate to 5,10-methenyltetrahydrofolate and then the hydrolysis of 5,10-methenyltetrahydrofolate to 10-formyltetrahydrofolate.</text>
</comment>
<comment type="catalytic activity">
    <reaction evidence="1">
        <text>(6R)-5,10-methylene-5,6,7,8-tetrahydrofolate + NADP(+) = (6R)-5,10-methenyltetrahydrofolate + NADPH</text>
        <dbReference type="Rhea" id="RHEA:22812"/>
        <dbReference type="ChEBI" id="CHEBI:15636"/>
        <dbReference type="ChEBI" id="CHEBI:57455"/>
        <dbReference type="ChEBI" id="CHEBI:57783"/>
        <dbReference type="ChEBI" id="CHEBI:58349"/>
        <dbReference type="EC" id="1.5.1.5"/>
    </reaction>
</comment>
<comment type="catalytic activity">
    <reaction evidence="1">
        <text>(6R)-5,10-methenyltetrahydrofolate + H2O = (6R)-10-formyltetrahydrofolate + H(+)</text>
        <dbReference type="Rhea" id="RHEA:23700"/>
        <dbReference type="ChEBI" id="CHEBI:15377"/>
        <dbReference type="ChEBI" id="CHEBI:15378"/>
        <dbReference type="ChEBI" id="CHEBI:57455"/>
        <dbReference type="ChEBI" id="CHEBI:195366"/>
        <dbReference type="EC" id="3.5.4.9"/>
    </reaction>
</comment>
<comment type="pathway">
    <text evidence="1">One-carbon metabolism; tetrahydrofolate interconversion.</text>
</comment>
<comment type="subunit">
    <text evidence="1">Homodimer.</text>
</comment>
<comment type="similarity">
    <text evidence="1">Belongs to the tetrahydrofolate dehydrogenase/cyclohydrolase family.</text>
</comment>
<sequence>MVAKILDGKQIAKDYRQGLQNQVEALKEKGFTPKLSVILVGNDGASQSYVRSKKKAAEKIGMISEIVHLEETATEEEVLNELNRLNNDDSVSGILVQVPLPKQVSEQKILEAINPDKDVDGFHPINIGKLYIDEQTFVPCTPLGIMEILKHADIDLEGKNAVVIGRSHIVGQPVSKLLLQKNASVTILHSRSKDMASYLKDADVIVSAVGKPGLVTKDVVKEGAVIIDVGNTPDENGKLKGDVDYDAVKEIAGAITPVPGGVGPLTITMVLNNTLLAEKMRRGIDS</sequence>